<proteinExistence type="inferred from homology"/>
<sequence>MSPKTETKASVGFKAGVKEYKLTYYTPEYETKDTDILAAFRVTPQPGVPPEEAGAAVAAESSTGTWTTVWTDGLTSLDRYKGRCYHIEPVPGEESQFIAYVAYPLDLFEEGSVTNMFTSIVGNVFGFKALRALRLEDLRIPTAYVKTFQGPPHGIQVERDKLNKYGRPLLGCTIKPKLGLSAKNYGRAVYECLRGGLDFTKDDENVNSQPFMRWRDRFLFCAEALYKAQAETGEIKGHYLNATAGTCEEMMKRAIFARELGVPIVMHDYLTGGFTANTSLAHYCRDNGLLLHIHRAMHAVIDRQKNHGIHFRVLAKALRMSGGDHIHSGTVVGKLEGERDITLGFVDLLRDDFIEKDRSRGIYFTQDWVSLPGVLPVASGGIHVWHMPALTEIFGDDSVLQFGGGTLGHPWGNAPGAVANRVALEACVQARNEGRDLASQGNEIIREASKWSPELAAACEVWKEIKFEFKAVDTL</sequence>
<accession>P30829</accession>
<gene>
    <name evidence="1" type="primary">rbcL</name>
</gene>
<name>RBL_MAGMA</name>
<comment type="function">
    <text evidence="1">RuBisCO catalyzes two reactions: the carboxylation of D-ribulose 1,5-bisphosphate, the primary event in carbon dioxide fixation, as well as the oxidative fragmentation of the pentose substrate in the photorespiration process. Both reactions occur simultaneously and in competition at the same active site.</text>
</comment>
<comment type="catalytic activity">
    <reaction evidence="1">
        <text>2 (2R)-3-phosphoglycerate + 2 H(+) = D-ribulose 1,5-bisphosphate + CO2 + H2O</text>
        <dbReference type="Rhea" id="RHEA:23124"/>
        <dbReference type="ChEBI" id="CHEBI:15377"/>
        <dbReference type="ChEBI" id="CHEBI:15378"/>
        <dbReference type="ChEBI" id="CHEBI:16526"/>
        <dbReference type="ChEBI" id="CHEBI:57870"/>
        <dbReference type="ChEBI" id="CHEBI:58272"/>
        <dbReference type="EC" id="4.1.1.39"/>
    </reaction>
</comment>
<comment type="catalytic activity">
    <reaction evidence="1">
        <text>D-ribulose 1,5-bisphosphate + O2 = 2-phosphoglycolate + (2R)-3-phosphoglycerate + 2 H(+)</text>
        <dbReference type="Rhea" id="RHEA:36631"/>
        <dbReference type="ChEBI" id="CHEBI:15378"/>
        <dbReference type="ChEBI" id="CHEBI:15379"/>
        <dbReference type="ChEBI" id="CHEBI:57870"/>
        <dbReference type="ChEBI" id="CHEBI:58033"/>
        <dbReference type="ChEBI" id="CHEBI:58272"/>
    </reaction>
</comment>
<comment type="cofactor">
    <cofactor evidence="1">
        <name>Mg(2+)</name>
        <dbReference type="ChEBI" id="CHEBI:18420"/>
    </cofactor>
    <text evidence="1">Binds 1 Mg(2+) ion per subunit.</text>
</comment>
<comment type="subunit">
    <text evidence="1">Heterohexadecamer of 8 large chains and 8 small chains; disulfide-linked. The disulfide link is formed within the large subunit homodimers.</text>
</comment>
<comment type="subcellular location">
    <subcellularLocation>
        <location>Plastid</location>
        <location>Chloroplast</location>
    </subcellularLocation>
</comment>
<comment type="PTM">
    <text evidence="1">The disulfide bond which can form in the large chain dimeric partners within the hexadecamer appears to be associated with oxidative stress and protein turnover.</text>
</comment>
<comment type="miscellaneous">
    <text evidence="1">The basic functional RuBisCO is composed of a large chain homodimer in a 'head-to-tail' conformation. In form I RuBisCO this homodimer is arranged in a barrel-like tetramer with the small subunits forming a tetrameric 'cap' on each end of the 'barrel'.</text>
</comment>
<comment type="similarity">
    <text evidence="1">Belongs to the RuBisCO large chain family. Type I subfamily.</text>
</comment>
<keyword id="KW-0007">Acetylation</keyword>
<keyword id="KW-0113">Calvin cycle</keyword>
<keyword id="KW-0120">Carbon dioxide fixation</keyword>
<keyword id="KW-0150">Chloroplast</keyword>
<keyword id="KW-1015">Disulfide bond</keyword>
<keyword id="KW-0456">Lyase</keyword>
<keyword id="KW-0460">Magnesium</keyword>
<keyword id="KW-0479">Metal-binding</keyword>
<keyword id="KW-0488">Methylation</keyword>
<keyword id="KW-0503">Monooxygenase</keyword>
<keyword id="KW-0560">Oxidoreductase</keyword>
<keyword id="KW-0601">Photorespiration</keyword>
<keyword id="KW-0602">Photosynthesis</keyword>
<keyword id="KW-0934">Plastid</keyword>
<geneLocation type="chloroplast"/>
<feature type="propeptide" id="PRO_0000031291" evidence="1">
    <location>
        <begin position="1"/>
        <end position="2"/>
    </location>
</feature>
<feature type="chain" id="PRO_0000031292" description="Ribulose bisphosphate carboxylase large chain">
    <location>
        <begin position="3"/>
        <end position="475"/>
    </location>
</feature>
<feature type="active site" description="Proton acceptor" evidence="1">
    <location>
        <position position="175"/>
    </location>
</feature>
<feature type="active site" description="Proton acceptor" evidence="1">
    <location>
        <position position="294"/>
    </location>
</feature>
<feature type="binding site" description="in homodimeric partner" evidence="1">
    <location>
        <position position="123"/>
    </location>
    <ligand>
        <name>substrate</name>
    </ligand>
</feature>
<feature type="binding site" evidence="1">
    <location>
        <position position="173"/>
    </location>
    <ligand>
        <name>substrate</name>
    </ligand>
</feature>
<feature type="binding site" evidence="1">
    <location>
        <position position="177"/>
    </location>
    <ligand>
        <name>substrate</name>
    </ligand>
</feature>
<feature type="binding site" description="via carbamate group" evidence="1">
    <location>
        <position position="201"/>
    </location>
    <ligand>
        <name>Mg(2+)</name>
        <dbReference type="ChEBI" id="CHEBI:18420"/>
    </ligand>
</feature>
<feature type="binding site" evidence="1">
    <location>
        <position position="203"/>
    </location>
    <ligand>
        <name>Mg(2+)</name>
        <dbReference type="ChEBI" id="CHEBI:18420"/>
    </ligand>
</feature>
<feature type="binding site" evidence="1">
    <location>
        <position position="204"/>
    </location>
    <ligand>
        <name>Mg(2+)</name>
        <dbReference type="ChEBI" id="CHEBI:18420"/>
    </ligand>
</feature>
<feature type="binding site" evidence="1">
    <location>
        <position position="295"/>
    </location>
    <ligand>
        <name>substrate</name>
    </ligand>
</feature>
<feature type="binding site" evidence="1">
    <location>
        <position position="327"/>
    </location>
    <ligand>
        <name>substrate</name>
    </ligand>
</feature>
<feature type="binding site" evidence="1">
    <location>
        <position position="379"/>
    </location>
    <ligand>
        <name>substrate</name>
    </ligand>
</feature>
<feature type="site" description="Transition state stabilizer" evidence="1">
    <location>
        <position position="334"/>
    </location>
</feature>
<feature type="modified residue" description="N-acetylproline" evidence="1">
    <location>
        <position position="3"/>
    </location>
</feature>
<feature type="modified residue" description="N6,N6,N6-trimethyllysine" evidence="1">
    <location>
        <position position="14"/>
    </location>
</feature>
<feature type="modified residue" description="N6-carboxylysine" evidence="1">
    <location>
        <position position="201"/>
    </location>
</feature>
<feature type="disulfide bond" description="Interchain; in linked form" evidence="1">
    <location>
        <position position="247"/>
    </location>
</feature>
<protein>
    <recommendedName>
        <fullName evidence="1">Ribulose bisphosphate carboxylase large chain</fullName>
        <shortName evidence="1">RuBisCO large subunit</shortName>
        <ecNumber evidence="1">4.1.1.39</ecNumber>
    </recommendedName>
</protein>
<organism>
    <name type="scientific">Magnolia macrophylla</name>
    <name type="common">Bigleaf magnolia</name>
    <dbReference type="NCBI Taxonomy" id="3410"/>
    <lineage>
        <taxon>Eukaryota</taxon>
        <taxon>Viridiplantae</taxon>
        <taxon>Streptophyta</taxon>
        <taxon>Embryophyta</taxon>
        <taxon>Tracheophyta</taxon>
        <taxon>Spermatophyta</taxon>
        <taxon>Magnoliopsida</taxon>
        <taxon>Magnoliidae</taxon>
        <taxon>Magnoliales</taxon>
        <taxon>Magnoliaceae</taxon>
        <taxon>Magnolia</taxon>
    </lineage>
</organism>
<reference key="1">
    <citation type="journal article" date="1990" name="Nature">
        <title>Chloroplast DNA sequence from a miocene Magnolia species.</title>
        <authorList>
            <person name="Golenberg E.M."/>
            <person name="Giannasi D.E."/>
            <person name="Clegg M.T."/>
            <person name="Smiley C.J."/>
            <person name="Durbin M."/>
            <person name="Henderson D."/>
            <person name="Zurawski G."/>
        </authorList>
    </citation>
    <scope>NUCLEOTIDE SEQUENCE [GENOMIC DNA]</scope>
</reference>
<dbReference type="EC" id="4.1.1.39" evidence="1"/>
<dbReference type="EMBL" id="X54345">
    <property type="protein sequence ID" value="CAA38233.1"/>
    <property type="molecule type" value="Genomic_DNA"/>
</dbReference>
<dbReference type="RefSeq" id="YP_010369329.1">
    <property type="nucleotide sequence ID" value="NC_062933.1"/>
</dbReference>
<dbReference type="SMR" id="P30829"/>
<dbReference type="GeneID" id="71950581"/>
<dbReference type="GO" id="GO:0009507">
    <property type="term" value="C:chloroplast"/>
    <property type="evidence" value="ECO:0007669"/>
    <property type="project" value="UniProtKB-SubCell"/>
</dbReference>
<dbReference type="GO" id="GO:0000287">
    <property type="term" value="F:magnesium ion binding"/>
    <property type="evidence" value="ECO:0007669"/>
    <property type="project" value="UniProtKB-UniRule"/>
</dbReference>
<dbReference type="GO" id="GO:0004497">
    <property type="term" value="F:monooxygenase activity"/>
    <property type="evidence" value="ECO:0007669"/>
    <property type="project" value="UniProtKB-KW"/>
</dbReference>
<dbReference type="GO" id="GO:0016984">
    <property type="term" value="F:ribulose-bisphosphate carboxylase activity"/>
    <property type="evidence" value="ECO:0007669"/>
    <property type="project" value="UniProtKB-UniRule"/>
</dbReference>
<dbReference type="GO" id="GO:0009853">
    <property type="term" value="P:photorespiration"/>
    <property type="evidence" value="ECO:0007669"/>
    <property type="project" value="UniProtKB-KW"/>
</dbReference>
<dbReference type="GO" id="GO:0019253">
    <property type="term" value="P:reductive pentose-phosphate cycle"/>
    <property type="evidence" value="ECO:0007669"/>
    <property type="project" value="UniProtKB-UniRule"/>
</dbReference>
<dbReference type="CDD" id="cd08212">
    <property type="entry name" value="RuBisCO_large_I"/>
    <property type="match status" value="1"/>
</dbReference>
<dbReference type="FunFam" id="3.20.20.110:FF:000001">
    <property type="entry name" value="Ribulose bisphosphate carboxylase large chain"/>
    <property type="match status" value="1"/>
</dbReference>
<dbReference type="FunFam" id="3.30.70.150:FF:000001">
    <property type="entry name" value="Ribulose bisphosphate carboxylase large chain"/>
    <property type="match status" value="1"/>
</dbReference>
<dbReference type="Gene3D" id="3.20.20.110">
    <property type="entry name" value="Ribulose bisphosphate carboxylase, large subunit, C-terminal domain"/>
    <property type="match status" value="1"/>
</dbReference>
<dbReference type="Gene3D" id="3.30.70.150">
    <property type="entry name" value="RuBisCO large subunit, N-terminal domain"/>
    <property type="match status" value="1"/>
</dbReference>
<dbReference type="HAMAP" id="MF_01338">
    <property type="entry name" value="RuBisCO_L_type1"/>
    <property type="match status" value="1"/>
</dbReference>
<dbReference type="InterPro" id="IPR033966">
    <property type="entry name" value="RuBisCO"/>
</dbReference>
<dbReference type="InterPro" id="IPR020878">
    <property type="entry name" value="RuBisCo_large_chain_AS"/>
</dbReference>
<dbReference type="InterPro" id="IPR000685">
    <property type="entry name" value="RuBisCO_lsu_C"/>
</dbReference>
<dbReference type="InterPro" id="IPR036376">
    <property type="entry name" value="RuBisCO_lsu_C_sf"/>
</dbReference>
<dbReference type="InterPro" id="IPR017443">
    <property type="entry name" value="RuBisCO_lsu_fd_N"/>
</dbReference>
<dbReference type="InterPro" id="IPR036422">
    <property type="entry name" value="RuBisCO_lsu_N_sf"/>
</dbReference>
<dbReference type="InterPro" id="IPR020888">
    <property type="entry name" value="RuBisCO_lsuI"/>
</dbReference>
<dbReference type="NCBIfam" id="NF003252">
    <property type="entry name" value="PRK04208.1"/>
    <property type="match status" value="1"/>
</dbReference>
<dbReference type="PANTHER" id="PTHR42704">
    <property type="entry name" value="RIBULOSE BISPHOSPHATE CARBOXYLASE"/>
    <property type="match status" value="1"/>
</dbReference>
<dbReference type="PANTHER" id="PTHR42704:SF15">
    <property type="entry name" value="RIBULOSE BISPHOSPHATE CARBOXYLASE LARGE CHAIN"/>
    <property type="match status" value="1"/>
</dbReference>
<dbReference type="Pfam" id="PF00016">
    <property type="entry name" value="RuBisCO_large"/>
    <property type="match status" value="1"/>
</dbReference>
<dbReference type="Pfam" id="PF02788">
    <property type="entry name" value="RuBisCO_large_N"/>
    <property type="match status" value="1"/>
</dbReference>
<dbReference type="SFLD" id="SFLDG01052">
    <property type="entry name" value="RuBisCO"/>
    <property type="match status" value="1"/>
</dbReference>
<dbReference type="SFLD" id="SFLDS00014">
    <property type="entry name" value="RuBisCO"/>
    <property type="match status" value="1"/>
</dbReference>
<dbReference type="SFLD" id="SFLDG00301">
    <property type="entry name" value="RuBisCO-like_proteins"/>
    <property type="match status" value="1"/>
</dbReference>
<dbReference type="SUPFAM" id="SSF51649">
    <property type="entry name" value="RuBisCo, C-terminal domain"/>
    <property type="match status" value="1"/>
</dbReference>
<dbReference type="SUPFAM" id="SSF54966">
    <property type="entry name" value="RuBisCO, large subunit, small (N-terminal) domain"/>
    <property type="match status" value="1"/>
</dbReference>
<dbReference type="PROSITE" id="PS00157">
    <property type="entry name" value="RUBISCO_LARGE"/>
    <property type="match status" value="1"/>
</dbReference>
<evidence type="ECO:0000255" key="1">
    <source>
        <dbReference type="HAMAP-Rule" id="MF_01338"/>
    </source>
</evidence>